<protein>
    <recommendedName>
        <fullName evidence="3">Cyclic nucleotide synthase CdnE01</fullName>
        <shortName evidence="3">Sha-CdnE01</shortName>
        <ecNumber evidence="5">2.7.7.-</ecNumber>
    </recommendedName>
</protein>
<dbReference type="EC" id="2.7.7.-" evidence="5"/>
<dbReference type="EMBL" id="JFOJ01000023">
    <property type="protein sequence ID" value="EZI36632.1"/>
    <property type="molecule type" value="Genomic_DNA"/>
</dbReference>
<dbReference type="RefSeq" id="WP_037559004.1">
    <property type="nucleotide sequence ID" value="NZ_CAJCGK010000042.1"/>
</dbReference>
<dbReference type="SMR" id="P0DXA9"/>
<dbReference type="GO" id="GO:0046872">
    <property type="term" value="F:metal ion binding"/>
    <property type="evidence" value="ECO:0007669"/>
    <property type="project" value="UniProtKB-KW"/>
</dbReference>
<dbReference type="GO" id="GO:0000166">
    <property type="term" value="F:nucleotide binding"/>
    <property type="evidence" value="ECO:0007669"/>
    <property type="project" value="UniProtKB-KW"/>
</dbReference>
<dbReference type="GO" id="GO:0016779">
    <property type="term" value="F:nucleotidyltransferase activity"/>
    <property type="evidence" value="ECO:0007669"/>
    <property type="project" value="UniProtKB-KW"/>
</dbReference>
<dbReference type="GO" id="GO:0003723">
    <property type="term" value="F:RNA binding"/>
    <property type="evidence" value="ECO:0007669"/>
    <property type="project" value="UniProtKB-KW"/>
</dbReference>
<dbReference type="GO" id="GO:0051607">
    <property type="term" value="P:defense response to virus"/>
    <property type="evidence" value="ECO:0007669"/>
    <property type="project" value="UniProtKB-KW"/>
</dbReference>
<dbReference type="CDD" id="cd05400">
    <property type="entry name" value="NT_2-5OAS_ClassI-CCAase"/>
    <property type="match status" value="1"/>
</dbReference>
<dbReference type="Gene3D" id="3.30.460.10">
    <property type="entry name" value="Beta Polymerase, domain 2"/>
    <property type="match status" value="1"/>
</dbReference>
<dbReference type="InterPro" id="IPR006116">
    <property type="entry name" value="NT_2-5OAS_ClassI-CCAase"/>
</dbReference>
<dbReference type="InterPro" id="IPR043519">
    <property type="entry name" value="NT_sf"/>
</dbReference>
<dbReference type="InterPro" id="IPR002934">
    <property type="entry name" value="Polymerase_NTP_transf_dom"/>
</dbReference>
<dbReference type="Pfam" id="PF01909">
    <property type="entry name" value="NTP_transf_2"/>
    <property type="match status" value="1"/>
</dbReference>
<dbReference type="SUPFAM" id="SSF81301">
    <property type="entry name" value="Nucleotidyltransferase"/>
    <property type="match status" value="1"/>
</dbReference>
<feature type="chain" id="PRO_0000459830" description="Cyclic nucleotide synthase CdnE01">
    <location>
        <begin position="1"/>
        <end position="300"/>
    </location>
</feature>
<feature type="binding site" evidence="1">
    <location>
        <position position="63"/>
    </location>
    <ligand>
        <name>Mg(2+)</name>
        <dbReference type="ChEBI" id="CHEBI:18420"/>
    </ligand>
</feature>
<feature type="binding site" evidence="1">
    <location>
        <position position="65"/>
    </location>
    <ligand>
        <name>Mg(2+)</name>
        <dbReference type="ChEBI" id="CHEBI:18420"/>
    </ligand>
</feature>
<feature type="binding site" evidence="1">
    <location>
        <position position="137"/>
    </location>
    <ligand>
        <name>Mg(2+)</name>
        <dbReference type="ChEBI" id="CHEBI:18420"/>
    </ligand>
</feature>
<sequence>MTIPTKKLDYWSQKGATQAPKNLREKIEKVLTANESKIKRKNQLDIYLQGSYRNNTNIFGSSDVDIVVQSNATFFSNISKLEAYERKIYNQTFDEATYTWRYFKNDVIKTLQYAFGSSNVEIGNKSIKIFTEDYEADVIPCFEHRNYLSFGNSEEDREYIPGIKFFTTDKGESIINYPKKHYVFGVDKNERTNNYYKPTIRIFKNIKKQLIKQKRITKKVVSSYFIESLLYNVPDRYFCIDNASNRVADILNWLTKNQDSFSTFICQNEQMNLFGSSQEQWNEEDADKFIFEINKFWNEW</sequence>
<gene>
    <name evidence="3" type="primary">cdnE</name>
    <name evidence="6" type="ORF">BW32_01263</name>
</gene>
<organism>
    <name type="scientific">Staphylococcus haemolyticus</name>
    <dbReference type="NCBI Taxonomy" id="1283"/>
    <lineage>
        <taxon>Bacteria</taxon>
        <taxon>Bacillati</taxon>
        <taxon>Bacillota</taxon>
        <taxon>Bacilli</taxon>
        <taxon>Bacillales</taxon>
        <taxon>Staphylococcaceae</taxon>
        <taxon>Staphylococcus</taxon>
    </lineage>
</organism>
<proteinExistence type="evidence at protein level"/>
<reference key="1">
    <citation type="journal article" date="2014" name="Genome Announc.">
        <title>Whole-genome sequences of 13 endophytic bacteria isolated from shrub willow (salix) grown in geneva, new york.</title>
        <authorList>
            <person name="Gan H.Y."/>
            <person name="Gan H.M."/>
            <person name="Savka M.A."/>
            <person name="Triassi A.J."/>
            <person name="Wheatley M.S."/>
            <person name="Smart L.B."/>
            <person name="Fabio E.S."/>
            <person name="Hudson A.O."/>
        </authorList>
    </citation>
    <scope>NUCLEOTIDE SEQUENCE [LARGE SCALE GENOMIC DNA]</scope>
    <source>
        <strain>RIT283</strain>
    </source>
</reference>
<reference key="2">
    <citation type="journal article" date="2019" name="Nature">
        <title>Bacterial cGAS-like enzymes synthesize diverse nucleotide signals.</title>
        <authorList>
            <person name="Whiteley A.T."/>
            <person name="Eaglesham J.B."/>
            <person name="de Oliveira Mann C.C."/>
            <person name="Morehouse B.R."/>
            <person name="Lowey B."/>
            <person name="Nieminen E.A."/>
            <person name="Danilchanka O."/>
            <person name="King D.S."/>
            <person name="Lee A.S.Y."/>
            <person name="Mekalanos J.J."/>
            <person name="Kranzusch P.J."/>
        </authorList>
    </citation>
    <scope>NOMENCLATURE</scope>
    <scope>SIMILARITY</scope>
</reference>
<reference key="3">
    <citation type="journal article" date="2023" name="Nature">
        <title>Bacterial cGAS senses a viral RNA to initiate immunity.</title>
        <authorList>
            <person name="Banh D.V."/>
            <person name="Roberts C.G."/>
            <person name="Morales-Amador A."/>
            <person name="Berryhill B.A."/>
            <person name="Chaudhry W."/>
            <person name="Levin B.R."/>
            <person name="Brady S.F."/>
            <person name="Marraffini L.A."/>
        </authorList>
    </citation>
    <scope>FUNCTION</scope>
    <scope>ANTIVIRAL DEFENSE</scope>
    <scope>ACTIVITY REGULATION</scope>
    <scope>RNA-BINDING</scope>
</reference>
<accession>P0DXA9</accession>
<comment type="function">
    <text evidence="2 5">Cyclic nucleotide synthase (second messenger synthase) of a CBASS antivirus system (PubMed:37968393). CBASS (cyclic oligonucleotide-based antiphage signaling system) provides immunity against bacteriophage. The CD-NTase protein synthesizes cyclic nucleotides in response to infection; these serve as specific second messenger signals (PubMed:37968393). The signals activate a diverse range of effectors, leading to bacterial cell death and thus abortive phage infection. A type I-B CBASS system (PubMed:37968393).</text>
</comment>
<comment type="function">
    <text evidence="2">Protects S.aureus against phage infection. When the CBASS operon (cdnE and the following gene) is introduced in S.aureus strain RN4220 there is strong protection against lytic DNA phages 80alpha-vir and phi-NM1-gamma-6 but little to no protection against phages phi-NM4-gamma-4 or phi-12-gamma-3 (PubMed:37968393).</text>
</comment>
<comment type="cofactor">
    <cofactor evidence="1">
        <name>Mg(2+)</name>
        <dbReference type="ChEBI" id="CHEBI:18420"/>
    </cofactor>
    <text evidence="1">Binds 1 Mg(2+) ion per subunit.</text>
</comment>
<comment type="activity regulation">
    <text evidence="2">Binds to and probably activated by a virus-derived, approximately 400 nucleotide RNA (called CBASS-activating bacteriophage RNA, cabRNA) that begins in the viral terminase subunit terS and extends into terL, as well as by a shorter RNA with part of the cabRNA sequence able to form a hairpin (PubMed:37968393). RNA secondary and/or tertiary structure, as well as viral infection itself, are important for CdnE activation (PubMed:37968393).</text>
</comment>
<comment type="similarity">
    <text evidence="4 5">Belongs to the CD-NTase family. E01 subfamily.</text>
</comment>
<keyword id="KW-0051">Antiviral defense</keyword>
<keyword id="KW-0460">Magnesium</keyword>
<keyword id="KW-0479">Metal-binding</keyword>
<keyword id="KW-0547">Nucleotide-binding</keyword>
<keyword id="KW-0548">Nucleotidyltransferase</keyword>
<keyword id="KW-0694">RNA-binding</keyword>
<keyword id="KW-0808">Transferase</keyword>
<evidence type="ECO:0000250" key="1">
    <source>
        <dbReference type="UniProtKB" id="P0DSP2"/>
    </source>
</evidence>
<evidence type="ECO:0000269" key="2">
    <source>
    </source>
</evidence>
<evidence type="ECO:0000303" key="3">
    <source>
    </source>
</evidence>
<evidence type="ECO:0000305" key="4">
    <source>
    </source>
</evidence>
<evidence type="ECO:0000305" key="5">
    <source>
    </source>
</evidence>
<evidence type="ECO:0000312" key="6">
    <source>
        <dbReference type="EMBL" id="EZI36632.1"/>
    </source>
</evidence>
<name>CDNE_STAHA</name>